<dbReference type="EMBL" id="CP001403">
    <property type="protein sequence ID" value="ACP47020.1"/>
    <property type="molecule type" value="Genomic_DNA"/>
</dbReference>
<dbReference type="RefSeq" id="WP_012714583.1">
    <property type="nucleotide sequence ID" value="NC_012622.1"/>
</dbReference>
<dbReference type="KEGG" id="siy:YG5714_2801"/>
<dbReference type="HOGENOM" id="CLU_172276_0_0_2"/>
<dbReference type="Proteomes" id="UP000002308">
    <property type="component" value="Chromosome"/>
</dbReference>
<dbReference type="HAMAP" id="MF_01245">
    <property type="entry name" value="UPF0248"/>
    <property type="match status" value="1"/>
</dbReference>
<dbReference type="InterPro" id="IPR040459">
    <property type="entry name" value="MJ1316"/>
</dbReference>
<dbReference type="InterPro" id="IPR007547">
    <property type="entry name" value="UPF0248"/>
</dbReference>
<dbReference type="Pfam" id="PF04457">
    <property type="entry name" value="MJ1316"/>
    <property type="match status" value="1"/>
</dbReference>
<gene>
    <name type="ordered locus">YG5714_2801</name>
</gene>
<feature type="chain" id="PRO_1000214098" description="UPF0248 protein YG5714_2801">
    <location>
        <begin position="1"/>
        <end position="80"/>
    </location>
</feature>
<sequence>MKIKDAVNMIRWEYREKIDDYVIIIIDRLTENGLKEISFSELDAVDNNYLYLKSEENTVIPLHRVLMIKRKSDNALIWKR</sequence>
<proteinExistence type="inferred from homology"/>
<organism>
    <name type="scientific">Saccharolobus islandicus (strain Y.G.57.14 / Yellowstone #1)</name>
    <name type="common">Sulfolobus islandicus</name>
    <dbReference type="NCBI Taxonomy" id="439386"/>
    <lineage>
        <taxon>Archaea</taxon>
        <taxon>Thermoproteota</taxon>
        <taxon>Thermoprotei</taxon>
        <taxon>Sulfolobales</taxon>
        <taxon>Sulfolobaceae</taxon>
        <taxon>Saccharolobus</taxon>
    </lineage>
</organism>
<name>Y2801_SACI7</name>
<protein>
    <recommendedName>
        <fullName evidence="1">UPF0248 protein YG5714_2801</fullName>
    </recommendedName>
</protein>
<reference key="1">
    <citation type="journal article" date="2009" name="Proc. Natl. Acad. Sci. U.S.A.">
        <title>Biogeography of the Sulfolobus islandicus pan-genome.</title>
        <authorList>
            <person name="Reno M.L."/>
            <person name="Held N.L."/>
            <person name="Fields C.J."/>
            <person name="Burke P.V."/>
            <person name="Whitaker R.J."/>
        </authorList>
    </citation>
    <scope>NUCLEOTIDE SEQUENCE [LARGE SCALE GENOMIC DNA]</scope>
    <source>
        <strain>Y.G.57.14 / Yellowstone #1</strain>
    </source>
</reference>
<evidence type="ECO:0000255" key="1">
    <source>
        <dbReference type="HAMAP-Rule" id="MF_01245"/>
    </source>
</evidence>
<comment type="similarity">
    <text evidence="1">Belongs to the UPF0248 family.</text>
</comment>
<accession>C3NBY5</accession>